<evidence type="ECO:0000255" key="1">
    <source>
        <dbReference type="HAMAP-Rule" id="MF_01818"/>
    </source>
</evidence>
<sequence length="317" mass="35603">MELEFLGTGAGSPSKSRNVSAVALKLLDEIKKIWLFDVGEGTQHQILNTTIRPRKIDKIFITHMHGDHIFGLPGFLSSRSFQGGEKMGPLTIYGPKGISDFVNISLKVSQTKLSYELNFVELEEEGLLLENDRFKVYAYKLDHRIECWGYRIEEKDYPGELQVEKLREAKAPSGPIYGRLKAGEVVTLEDGRTIDGKDFIGKAKKGRIVTILGDTRQTPNLKLLAKDADVLVHESTFGKGEGKLARNYHHSTCVQAATLAKEVGVKQLLLTHISARYVGKMVKVLEKEAKKVFPNTKVVKDFDTFNIPFPERKDDEQ</sequence>
<name>RNZ_LIGS1</name>
<accession>Q1WT50</accession>
<organism>
    <name type="scientific">Ligilactobacillus salivarius (strain UCC118)</name>
    <name type="common">Lactobacillus salivarius</name>
    <dbReference type="NCBI Taxonomy" id="362948"/>
    <lineage>
        <taxon>Bacteria</taxon>
        <taxon>Bacillati</taxon>
        <taxon>Bacillota</taxon>
        <taxon>Bacilli</taxon>
        <taxon>Lactobacillales</taxon>
        <taxon>Lactobacillaceae</taxon>
        <taxon>Ligilactobacillus</taxon>
    </lineage>
</organism>
<comment type="function">
    <text evidence="1">Zinc phosphodiesterase, which displays some tRNA 3'-processing endonuclease activity. Probably involved in tRNA maturation, by removing a 3'-trailer from precursor tRNA.</text>
</comment>
<comment type="catalytic activity">
    <reaction evidence="1">
        <text>Endonucleolytic cleavage of RNA, removing extra 3' nucleotides from tRNA precursor, generating 3' termini of tRNAs. A 3'-hydroxy group is left at the tRNA terminus and a 5'-phosphoryl group is left at the trailer molecule.</text>
        <dbReference type="EC" id="3.1.26.11"/>
    </reaction>
</comment>
<comment type="cofactor">
    <cofactor evidence="1">
        <name>Zn(2+)</name>
        <dbReference type="ChEBI" id="CHEBI:29105"/>
    </cofactor>
    <text evidence="1">Binds 2 Zn(2+) ions.</text>
</comment>
<comment type="subunit">
    <text evidence="1">Homodimer.</text>
</comment>
<comment type="similarity">
    <text evidence="1">Belongs to the RNase Z family.</text>
</comment>
<keyword id="KW-0255">Endonuclease</keyword>
<keyword id="KW-0378">Hydrolase</keyword>
<keyword id="KW-0479">Metal-binding</keyword>
<keyword id="KW-0540">Nuclease</keyword>
<keyword id="KW-1185">Reference proteome</keyword>
<keyword id="KW-0819">tRNA processing</keyword>
<keyword id="KW-0862">Zinc</keyword>
<gene>
    <name evidence="1" type="primary">rnz</name>
    <name type="ordered locus">LSL_1093</name>
</gene>
<proteinExistence type="inferred from homology"/>
<protein>
    <recommendedName>
        <fullName evidence="1">Ribonuclease Z</fullName>
        <shortName evidence="1">RNase Z</shortName>
        <ecNumber evidence="1">3.1.26.11</ecNumber>
    </recommendedName>
    <alternativeName>
        <fullName evidence="1">tRNA 3 endonuclease</fullName>
    </alternativeName>
    <alternativeName>
        <fullName evidence="1">tRNase Z</fullName>
    </alternativeName>
</protein>
<reference key="1">
    <citation type="journal article" date="2006" name="Proc. Natl. Acad. Sci. U.S.A.">
        <title>Multireplicon genome architecture of Lactobacillus salivarius.</title>
        <authorList>
            <person name="Claesson M.J."/>
            <person name="Li Y."/>
            <person name="Leahy S."/>
            <person name="Canchaya C."/>
            <person name="van Pijkeren J.P."/>
            <person name="Cerdeno-Tarraga A.M."/>
            <person name="Parkhill J."/>
            <person name="Flynn S."/>
            <person name="O'Sullivan G.C."/>
            <person name="Collins J.K."/>
            <person name="Higgins D."/>
            <person name="Shanahan F."/>
            <person name="Fitzgerald G.F."/>
            <person name="van Sinderen D."/>
            <person name="O'Toole P.W."/>
        </authorList>
    </citation>
    <scope>NUCLEOTIDE SEQUENCE [LARGE SCALE GENOMIC DNA]</scope>
    <source>
        <strain>UCC118</strain>
    </source>
</reference>
<dbReference type="EC" id="3.1.26.11" evidence="1"/>
<dbReference type="EMBL" id="CP000233">
    <property type="protein sequence ID" value="ABD99901.1"/>
    <property type="molecule type" value="Genomic_DNA"/>
</dbReference>
<dbReference type="RefSeq" id="WP_011476161.1">
    <property type="nucleotide sequence ID" value="NC_007929.1"/>
</dbReference>
<dbReference type="RefSeq" id="YP_535984.1">
    <property type="nucleotide sequence ID" value="NC_007929.1"/>
</dbReference>
<dbReference type="SMR" id="Q1WT50"/>
<dbReference type="STRING" id="362948.LSL_1093"/>
<dbReference type="KEGG" id="lsl:LSL_1093"/>
<dbReference type="PATRIC" id="fig|362948.14.peg.1165"/>
<dbReference type="HOGENOM" id="CLU_031317_2_0_9"/>
<dbReference type="OrthoDB" id="9800940at2"/>
<dbReference type="Proteomes" id="UP000006559">
    <property type="component" value="Chromosome"/>
</dbReference>
<dbReference type="GO" id="GO:0042781">
    <property type="term" value="F:3'-tRNA processing endoribonuclease activity"/>
    <property type="evidence" value="ECO:0007669"/>
    <property type="project" value="UniProtKB-UniRule"/>
</dbReference>
<dbReference type="GO" id="GO:0008270">
    <property type="term" value="F:zinc ion binding"/>
    <property type="evidence" value="ECO:0007669"/>
    <property type="project" value="UniProtKB-UniRule"/>
</dbReference>
<dbReference type="CDD" id="cd07717">
    <property type="entry name" value="RNaseZ_ZiPD-like_MBL-fold"/>
    <property type="match status" value="1"/>
</dbReference>
<dbReference type="FunFam" id="3.60.15.10:FF:000002">
    <property type="entry name" value="Ribonuclease Z"/>
    <property type="match status" value="1"/>
</dbReference>
<dbReference type="Gene3D" id="3.60.15.10">
    <property type="entry name" value="Ribonuclease Z/Hydroxyacylglutathione hydrolase-like"/>
    <property type="match status" value="1"/>
</dbReference>
<dbReference type="HAMAP" id="MF_01818">
    <property type="entry name" value="RNase_Z_BN"/>
    <property type="match status" value="1"/>
</dbReference>
<dbReference type="InterPro" id="IPR001279">
    <property type="entry name" value="Metallo-B-lactamas"/>
</dbReference>
<dbReference type="InterPro" id="IPR036866">
    <property type="entry name" value="RibonucZ/Hydroxyglut_hydro"/>
</dbReference>
<dbReference type="InterPro" id="IPR013471">
    <property type="entry name" value="RNase_Z/BN"/>
</dbReference>
<dbReference type="NCBIfam" id="NF000801">
    <property type="entry name" value="PRK00055.1-3"/>
    <property type="match status" value="1"/>
</dbReference>
<dbReference type="NCBIfam" id="TIGR02651">
    <property type="entry name" value="RNase_Z"/>
    <property type="match status" value="1"/>
</dbReference>
<dbReference type="PANTHER" id="PTHR46018">
    <property type="entry name" value="ZINC PHOSPHODIESTERASE ELAC PROTEIN 1"/>
    <property type="match status" value="1"/>
</dbReference>
<dbReference type="PANTHER" id="PTHR46018:SF2">
    <property type="entry name" value="ZINC PHOSPHODIESTERASE ELAC PROTEIN 1"/>
    <property type="match status" value="1"/>
</dbReference>
<dbReference type="Pfam" id="PF00753">
    <property type="entry name" value="Lactamase_B"/>
    <property type="match status" value="1"/>
</dbReference>
<dbReference type="SUPFAM" id="SSF56281">
    <property type="entry name" value="Metallo-hydrolase/oxidoreductase"/>
    <property type="match status" value="1"/>
</dbReference>
<feature type="chain" id="PRO_1000070292" description="Ribonuclease Z">
    <location>
        <begin position="1"/>
        <end position="317"/>
    </location>
</feature>
<feature type="active site" description="Proton acceptor" evidence="1">
    <location>
        <position position="67"/>
    </location>
</feature>
<feature type="binding site" evidence="1">
    <location>
        <position position="63"/>
    </location>
    <ligand>
        <name>Zn(2+)</name>
        <dbReference type="ChEBI" id="CHEBI:29105"/>
        <label>1</label>
        <note>catalytic</note>
    </ligand>
</feature>
<feature type="binding site" evidence="1">
    <location>
        <position position="65"/>
    </location>
    <ligand>
        <name>Zn(2+)</name>
        <dbReference type="ChEBI" id="CHEBI:29105"/>
        <label>1</label>
        <note>catalytic</note>
    </ligand>
</feature>
<feature type="binding site" evidence="1">
    <location>
        <position position="67"/>
    </location>
    <ligand>
        <name>Zn(2+)</name>
        <dbReference type="ChEBI" id="CHEBI:29105"/>
        <label>2</label>
        <note>catalytic</note>
    </ligand>
</feature>
<feature type="binding site" evidence="1">
    <location>
        <position position="68"/>
    </location>
    <ligand>
        <name>Zn(2+)</name>
        <dbReference type="ChEBI" id="CHEBI:29105"/>
        <label>2</label>
        <note>catalytic</note>
    </ligand>
</feature>
<feature type="binding site" evidence="1">
    <location>
        <position position="143"/>
    </location>
    <ligand>
        <name>Zn(2+)</name>
        <dbReference type="ChEBI" id="CHEBI:29105"/>
        <label>1</label>
        <note>catalytic</note>
    </ligand>
</feature>
<feature type="binding site" evidence="1">
    <location>
        <position position="214"/>
    </location>
    <ligand>
        <name>Zn(2+)</name>
        <dbReference type="ChEBI" id="CHEBI:29105"/>
        <label>1</label>
        <note>catalytic</note>
    </ligand>
</feature>
<feature type="binding site" evidence="1">
    <location>
        <position position="214"/>
    </location>
    <ligand>
        <name>Zn(2+)</name>
        <dbReference type="ChEBI" id="CHEBI:29105"/>
        <label>2</label>
        <note>catalytic</note>
    </ligand>
</feature>
<feature type="binding site" evidence="1">
    <location>
        <position position="272"/>
    </location>
    <ligand>
        <name>Zn(2+)</name>
        <dbReference type="ChEBI" id="CHEBI:29105"/>
        <label>2</label>
        <note>catalytic</note>
    </ligand>
</feature>